<name>PAT_ECOBW</name>
<proteinExistence type="inferred from homology"/>
<protein>
    <recommendedName>
        <fullName evidence="1">Putrescine aminotransferase</fullName>
        <shortName evidence="1">PAT</shortName>
        <shortName evidence="1">PATase</shortName>
        <ecNumber evidence="1">2.6.1.82</ecNumber>
    </recommendedName>
    <alternativeName>
        <fullName evidence="1">Cadaverine transaminase</fullName>
    </alternativeName>
    <alternativeName>
        <fullName evidence="1">Diamine transaminase</fullName>
        <ecNumber evidence="1">2.6.1.29</ecNumber>
    </alternativeName>
    <alternativeName>
        <fullName evidence="1">Putrescine transaminase</fullName>
    </alternativeName>
    <alternativeName>
        <fullName evidence="1">Putrescine--2-oxoglutaric acid transaminase</fullName>
    </alternativeName>
</protein>
<comment type="function">
    <text evidence="1">Catalyzes the aminotransferase reaction from putrescine to 2-oxoglutarate, leading to glutamate and 4-aminobutanal, which spontaneously cyclizes to form 1-pyrroline. This is the first step in one of two pathways for putrescine degradation, where putrescine is converted into 4-aminobutanoate (gamma-aminobutyrate or GABA) via 4-aminobutanal. Also functions as a cadaverine transaminase in a a L-lysine degradation pathway to succinate that proceeds via cadaverine, glutarate and L-2-hydroxyglutarate.</text>
</comment>
<comment type="catalytic activity">
    <reaction evidence="1">
        <text>an alkane-alpha,omega-diamine + 2-oxoglutarate = an omega-aminoaldehyde + L-glutamate</text>
        <dbReference type="Rhea" id="RHEA:18217"/>
        <dbReference type="Rhea" id="RHEA-COMP:9766"/>
        <dbReference type="Rhea" id="RHEA-COMP:12750"/>
        <dbReference type="ChEBI" id="CHEBI:16810"/>
        <dbReference type="ChEBI" id="CHEBI:29985"/>
        <dbReference type="ChEBI" id="CHEBI:70977"/>
        <dbReference type="ChEBI" id="CHEBI:133427"/>
        <dbReference type="EC" id="2.6.1.29"/>
    </reaction>
    <physiologicalReaction direction="left-to-right" evidence="1">
        <dbReference type="Rhea" id="RHEA:18218"/>
    </physiologicalReaction>
</comment>
<comment type="catalytic activity">
    <reaction evidence="1">
        <text>putrescine + 2-oxoglutarate = 1-pyrroline + L-glutamate + H2O</text>
        <dbReference type="Rhea" id="RHEA:12268"/>
        <dbReference type="ChEBI" id="CHEBI:15377"/>
        <dbReference type="ChEBI" id="CHEBI:16810"/>
        <dbReference type="ChEBI" id="CHEBI:29985"/>
        <dbReference type="ChEBI" id="CHEBI:36781"/>
        <dbReference type="ChEBI" id="CHEBI:326268"/>
        <dbReference type="EC" id="2.6.1.82"/>
    </reaction>
    <physiologicalReaction direction="left-to-right" evidence="1">
        <dbReference type="Rhea" id="RHEA:12269"/>
    </physiologicalReaction>
</comment>
<comment type="catalytic activity">
    <reaction evidence="1">
        <text>cadaverine + 2-oxoglutarate = 5-aminopentanal + L-glutamate</text>
        <dbReference type="Rhea" id="RHEA:61624"/>
        <dbReference type="ChEBI" id="CHEBI:16810"/>
        <dbReference type="ChEBI" id="CHEBI:29985"/>
        <dbReference type="ChEBI" id="CHEBI:58384"/>
        <dbReference type="ChEBI" id="CHEBI:144896"/>
    </reaction>
    <physiologicalReaction direction="left-to-right" evidence="1">
        <dbReference type="Rhea" id="RHEA:61625"/>
    </physiologicalReaction>
</comment>
<comment type="cofactor">
    <cofactor evidence="1">
        <name>pyridoxal 5'-phosphate</name>
        <dbReference type="ChEBI" id="CHEBI:597326"/>
    </cofactor>
</comment>
<comment type="pathway">
    <text evidence="1">Amine and polyamine degradation; putrescine degradation; 4-aminobutanal from putrescine (transaminase route): step 1/1.</text>
</comment>
<comment type="similarity">
    <text evidence="1">Belongs to the class-III pyridoxal-phosphate-dependent aminotransferase family. Putrescine aminotransferase subfamily.</text>
</comment>
<keyword id="KW-0032">Aminotransferase</keyword>
<keyword id="KW-0663">Pyridoxal phosphate</keyword>
<keyword id="KW-0808">Transferase</keyword>
<feature type="chain" id="PRO_1000214198" description="Putrescine aminotransferase">
    <location>
        <begin position="1"/>
        <end position="459"/>
    </location>
</feature>
<feature type="binding site" description="in other chain" evidence="1">
    <location>
        <begin position="150"/>
        <end position="151"/>
    </location>
    <ligand>
        <name>pyridoxal 5'-phosphate</name>
        <dbReference type="ChEBI" id="CHEBI:597326"/>
        <note>ligand shared between dimeric partners</note>
    </ligand>
</feature>
<feature type="binding site" description="in other chain" evidence="1">
    <location>
        <position position="274"/>
    </location>
    <ligand>
        <name>pyridoxal 5'-phosphate</name>
        <dbReference type="ChEBI" id="CHEBI:597326"/>
        <note>ligand shared between dimeric partners</note>
    </ligand>
</feature>
<feature type="binding site" evidence="1">
    <location>
        <position position="332"/>
    </location>
    <ligand>
        <name>pyridoxal 5'-phosphate</name>
        <dbReference type="ChEBI" id="CHEBI:597326"/>
        <note>ligand shared between dimeric partners</note>
    </ligand>
</feature>
<feature type="modified residue" description="N6-(pyridoxal phosphate)lysine" evidence="1">
    <location>
        <position position="300"/>
    </location>
</feature>
<dbReference type="EC" id="2.6.1.82" evidence="1"/>
<dbReference type="EC" id="2.6.1.29" evidence="1"/>
<dbReference type="EMBL" id="CP001396">
    <property type="protein sequence ID" value="ACR65342.1"/>
    <property type="molecule type" value="Genomic_DNA"/>
</dbReference>
<dbReference type="SMR" id="C4ZQY9"/>
<dbReference type="KEGG" id="ebw:BWG_2783"/>
<dbReference type="HOGENOM" id="CLU_016922_10_0_6"/>
<dbReference type="UniPathway" id="UPA00188">
    <property type="reaction ID" value="UER00290"/>
</dbReference>
<dbReference type="GO" id="GO:0019161">
    <property type="term" value="F:diamine transaminase activity"/>
    <property type="evidence" value="ECO:0007669"/>
    <property type="project" value="UniProtKB-EC"/>
</dbReference>
<dbReference type="GO" id="GO:0042802">
    <property type="term" value="F:identical protein binding"/>
    <property type="evidence" value="ECO:0007669"/>
    <property type="project" value="TreeGrafter"/>
</dbReference>
<dbReference type="GO" id="GO:0033094">
    <property type="term" value="F:putrescine--2-oxoglutarate transaminase activity"/>
    <property type="evidence" value="ECO:0007669"/>
    <property type="project" value="UniProtKB-UniRule"/>
</dbReference>
<dbReference type="GO" id="GO:0030170">
    <property type="term" value="F:pyridoxal phosphate binding"/>
    <property type="evidence" value="ECO:0007669"/>
    <property type="project" value="UniProtKB-UniRule"/>
</dbReference>
<dbReference type="GO" id="GO:0019477">
    <property type="term" value="P:L-lysine catabolic process"/>
    <property type="evidence" value="ECO:0007669"/>
    <property type="project" value="UniProtKB-UniRule"/>
</dbReference>
<dbReference type="GO" id="GO:0009447">
    <property type="term" value="P:putrescine catabolic process"/>
    <property type="evidence" value="ECO:0007669"/>
    <property type="project" value="UniProtKB-UniRule"/>
</dbReference>
<dbReference type="CDD" id="cd00610">
    <property type="entry name" value="OAT_like"/>
    <property type="match status" value="1"/>
</dbReference>
<dbReference type="FunFam" id="3.40.640.10:FF:000004">
    <property type="entry name" value="Acetylornithine aminotransferase"/>
    <property type="match status" value="1"/>
</dbReference>
<dbReference type="Gene3D" id="3.90.1150.10">
    <property type="entry name" value="Aspartate Aminotransferase, domain 1"/>
    <property type="match status" value="1"/>
</dbReference>
<dbReference type="Gene3D" id="3.40.640.10">
    <property type="entry name" value="Type I PLP-dependent aspartate aminotransferase-like (Major domain)"/>
    <property type="match status" value="1"/>
</dbReference>
<dbReference type="HAMAP" id="MF_01276">
    <property type="entry name" value="Putres_aminotrans_3"/>
    <property type="match status" value="1"/>
</dbReference>
<dbReference type="InterPro" id="IPR005814">
    <property type="entry name" value="Aminotrans_3"/>
</dbReference>
<dbReference type="InterPro" id="IPR049704">
    <property type="entry name" value="Aminotrans_3_PPA_site"/>
</dbReference>
<dbReference type="InterPro" id="IPR050103">
    <property type="entry name" value="Class-III_PLP-dep_AT"/>
</dbReference>
<dbReference type="InterPro" id="IPR017747">
    <property type="entry name" value="Putrescine_aminotransferase"/>
</dbReference>
<dbReference type="InterPro" id="IPR015424">
    <property type="entry name" value="PyrdxlP-dep_Trfase"/>
</dbReference>
<dbReference type="InterPro" id="IPR015421">
    <property type="entry name" value="PyrdxlP-dep_Trfase_major"/>
</dbReference>
<dbReference type="InterPro" id="IPR015422">
    <property type="entry name" value="PyrdxlP-dep_Trfase_small"/>
</dbReference>
<dbReference type="NCBIfam" id="NF008570">
    <property type="entry name" value="PRK11522.1"/>
    <property type="match status" value="1"/>
</dbReference>
<dbReference type="NCBIfam" id="TIGR03372">
    <property type="entry name" value="putres_am_tran"/>
    <property type="match status" value="1"/>
</dbReference>
<dbReference type="PANTHER" id="PTHR11986">
    <property type="entry name" value="AMINOTRANSFERASE CLASS III"/>
    <property type="match status" value="1"/>
</dbReference>
<dbReference type="PANTHER" id="PTHR11986:SF112">
    <property type="entry name" value="PUTRESCINE AMINOTRANSFERASE"/>
    <property type="match status" value="1"/>
</dbReference>
<dbReference type="Pfam" id="PF00202">
    <property type="entry name" value="Aminotran_3"/>
    <property type="match status" value="1"/>
</dbReference>
<dbReference type="PIRSF" id="PIRSF000521">
    <property type="entry name" value="Transaminase_4ab_Lys_Orn"/>
    <property type="match status" value="1"/>
</dbReference>
<dbReference type="SUPFAM" id="SSF53383">
    <property type="entry name" value="PLP-dependent transferases"/>
    <property type="match status" value="1"/>
</dbReference>
<dbReference type="PROSITE" id="PS00600">
    <property type="entry name" value="AA_TRANSFER_CLASS_3"/>
    <property type="match status" value="1"/>
</dbReference>
<sequence>MNRLPSSASALACSAHALNLIEKRTLDHEEMKALNREVIEYFKEHVNPGFLEYRKSVTAGGDYGAVEWQAGSLNTLVDTQGQEFIDCLGGFGIFNVGHRNPVVVSAVQNQLAKQPLHSQELLDPLRAMLAKTLAALTPGKLKYSFFCNSGTESVEAALKLAKAYQSPRGKFTFIATSGAFHGKSLGALSATAKSTFRKPFMPLLPGFRHVPFGNIEAMRTALNECKKTGDDVAAVILEPIQGEGGVILPPPGYLTAVRKLCDEFGALMILDEVQTGMGRTGKMFACEHENVQPDILCLAKALGGGVMPIGATIATEEVFSVLFDNPFLHTTTFGGNPLACAAALATINVLLEQNLPAQAEQKGDMLLDGFRQLAREYPDLVQEARGKGMLMAIEFVDNEIGYNFASEMFRQRVLVAGTLNNAKTIRIEPPLTLTIEQCELVIKAARKALAAMRVSVEEA</sequence>
<accession>C4ZQY9</accession>
<evidence type="ECO:0000255" key="1">
    <source>
        <dbReference type="HAMAP-Rule" id="MF_01276"/>
    </source>
</evidence>
<reference key="1">
    <citation type="journal article" date="2009" name="J. Bacteriol.">
        <title>Genomic sequencing reveals regulatory mutations and recombinational events in the widely used MC4100 lineage of Escherichia coli K-12.</title>
        <authorList>
            <person name="Ferenci T."/>
            <person name="Zhou Z."/>
            <person name="Betteridge T."/>
            <person name="Ren Y."/>
            <person name="Liu Y."/>
            <person name="Feng L."/>
            <person name="Reeves P.R."/>
            <person name="Wang L."/>
        </authorList>
    </citation>
    <scope>NUCLEOTIDE SEQUENCE [LARGE SCALE GENOMIC DNA]</scope>
    <source>
        <strain>K12 / MC4100 / BW2952</strain>
    </source>
</reference>
<organism>
    <name type="scientific">Escherichia coli (strain K12 / MC4100 / BW2952)</name>
    <dbReference type="NCBI Taxonomy" id="595496"/>
    <lineage>
        <taxon>Bacteria</taxon>
        <taxon>Pseudomonadati</taxon>
        <taxon>Pseudomonadota</taxon>
        <taxon>Gammaproteobacteria</taxon>
        <taxon>Enterobacterales</taxon>
        <taxon>Enterobacteriaceae</taxon>
        <taxon>Escherichia</taxon>
    </lineage>
</organism>
<gene>
    <name evidence="1" type="primary">patA</name>
    <name type="ordered locus">BWG_2783</name>
</gene>